<sequence length="408" mass="44106">MNFKKTLLSIAIASASLTPAFSYSAPLLLDNTVHQTSQIAGANAWLEISLGQFKSNIEQFKSHIAPQTKICAVMKADAYGNGIRGLMPTILEQQIPCVAIASNAEAKLVRESGFEGELIRVRSASTSEIEQALSLDIEELIGSEQQARELASLAEKYSKTIKVHLALNDGGMGRNGIDMSTERGPKEAVAIATHPSVAVVGIMTHFPNYNAEDVRTKLKSFNQHAQWLMESAGLKREEITLHVANSYTALNVPEAQLDMVRPGGVLYGDLPTNPEYPSIVAFKTRVASLHSLPAGSTVGYDSTFTTANDAVMANLTVGYSDGYPRKMGNKAQVLINGQRANVVGVASMNTTMVDVSNIKGVLPGDEVTLFGAQKNQHISVGEMEENAEVIFPELYTIWGTSNPRFYVK</sequence>
<comment type="function">
    <text evidence="1">Amino-acid racemase able to utilize a broad range of substrates.</text>
</comment>
<comment type="catalytic activity">
    <reaction evidence="1">
        <text>an L-alpha-amino acid = a D-alpha-amino acid</text>
        <dbReference type="Rhea" id="RHEA:18317"/>
        <dbReference type="ChEBI" id="CHEBI:59869"/>
        <dbReference type="ChEBI" id="CHEBI:59871"/>
        <dbReference type="EC" id="5.1.1.10"/>
    </reaction>
</comment>
<comment type="catalytic activity">
    <reaction evidence="1">
        <text>L-lysine = D-lysine</text>
        <dbReference type="Rhea" id="RHEA:22864"/>
        <dbReference type="ChEBI" id="CHEBI:32551"/>
        <dbReference type="ChEBI" id="CHEBI:32557"/>
    </reaction>
</comment>
<comment type="catalytic activity">
    <reaction evidence="1">
        <text>L-arginine = D-arginine</text>
        <dbReference type="Rhea" id="RHEA:18069"/>
        <dbReference type="ChEBI" id="CHEBI:32682"/>
        <dbReference type="ChEBI" id="CHEBI:32689"/>
    </reaction>
</comment>
<comment type="cofactor">
    <cofactor evidence="1">
        <name>pyridoxal 5'-phosphate</name>
        <dbReference type="ChEBI" id="CHEBI:597326"/>
    </cofactor>
</comment>
<comment type="subcellular location">
    <subcellularLocation>
        <location evidence="1">Periplasm</location>
    </subcellularLocation>
</comment>
<comment type="similarity">
    <text evidence="1">Belongs to the alanine racemase family. Bsr subfamily.</text>
</comment>
<feature type="signal peptide" evidence="1">
    <location>
        <begin position="1"/>
        <end position="24"/>
    </location>
</feature>
<feature type="chain" id="PRO_0000114596" description="Broad specificity amino-acid racemase" evidence="1">
    <location>
        <begin position="25"/>
        <end position="408"/>
    </location>
</feature>
<feature type="active site" description="Proton acceptor" evidence="1">
    <location>
        <position position="75"/>
    </location>
</feature>
<feature type="active site" description="Proton acceptor" evidence="1">
    <location>
        <position position="300"/>
    </location>
</feature>
<feature type="binding site" evidence="1">
    <location>
        <position position="174"/>
    </location>
    <ligand>
        <name>substrate</name>
    </ligand>
</feature>
<feature type="binding site" evidence="1">
    <location>
        <position position="348"/>
    </location>
    <ligand>
        <name>substrate</name>
    </ligand>
</feature>
<feature type="modified residue" description="N6-(pyridoxal phosphate)lysine" evidence="1">
    <location>
        <position position="75"/>
    </location>
</feature>
<feature type="disulfide bond" evidence="1">
    <location>
        <begin position="71"/>
        <end position="97"/>
    </location>
</feature>
<organism>
    <name type="scientific">Vibrio vulnificus (strain CMCP6)</name>
    <dbReference type="NCBI Taxonomy" id="216895"/>
    <lineage>
        <taxon>Bacteria</taxon>
        <taxon>Pseudomonadati</taxon>
        <taxon>Pseudomonadota</taxon>
        <taxon>Gammaproteobacteria</taxon>
        <taxon>Vibrionales</taxon>
        <taxon>Vibrionaceae</taxon>
        <taxon>Vibrio</taxon>
    </lineage>
</organism>
<dbReference type="EC" id="5.1.1.10" evidence="1"/>
<dbReference type="EMBL" id="AE016796">
    <property type="protein sequence ID" value="AAO07429.1"/>
    <property type="molecule type" value="Genomic_DNA"/>
</dbReference>
<dbReference type="RefSeq" id="WP_011081429.1">
    <property type="nucleotide sequence ID" value="NC_004460.2"/>
</dbReference>
<dbReference type="SMR" id="Q8D6Q0"/>
<dbReference type="KEGG" id="vvu:VV2_0478"/>
<dbReference type="HOGENOM" id="CLU_028393_2_2_6"/>
<dbReference type="Proteomes" id="UP000002275">
    <property type="component" value="Chromosome 2"/>
</dbReference>
<dbReference type="GO" id="GO:0005829">
    <property type="term" value="C:cytosol"/>
    <property type="evidence" value="ECO:0007669"/>
    <property type="project" value="TreeGrafter"/>
</dbReference>
<dbReference type="GO" id="GO:0042597">
    <property type="term" value="C:periplasmic space"/>
    <property type="evidence" value="ECO:0007669"/>
    <property type="project" value="UniProtKB-SubCell"/>
</dbReference>
<dbReference type="GO" id="GO:0008784">
    <property type="term" value="F:alanine racemase activity"/>
    <property type="evidence" value="ECO:0007669"/>
    <property type="project" value="InterPro"/>
</dbReference>
<dbReference type="GO" id="GO:0047679">
    <property type="term" value="F:arginine racemase activity"/>
    <property type="evidence" value="ECO:0007669"/>
    <property type="project" value="RHEA"/>
</dbReference>
<dbReference type="GO" id="GO:0018113">
    <property type="term" value="F:lysine racemase activity"/>
    <property type="evidence" value="ECO:0007669"/>
    <property type="project" value="RHEA"/>
</dbReference>
<dbReference type="GO" id="GO:0030170">
    <property type="term" value="F:pyridoxal phosphate binding"/>
    <property type="evidence" value="ECO:0007669"/>
    <property type="project" value="UniProtKB-UniRule"/>
</dbReference>
<dbReference type="CDD" id="cd06826">
    <property type="entry name" value="PLPDE_III_AR2"/>
    <property type="match status" value="1"/>
</dbReference>
<dbReference type="Gene3D" id="3.20.20.10">
    <property type="entry name" value="Alanine racemase"/>
    <property type="match status" value="1"/>
</dbReference>
<dbReference type="Gene3D" id="2.40.37.10">
    <property type="entry name" value="Lyase, Ornithine Decarboxylase, Chain A, domain 1"/>
    <property type="match status" value="1"/>
</dbReference>
<dbReference type="HAMAP" id="MF_02212">
    <property type="entry name" value="Bsr_racemase"/>
    <property type="match status" value="1"/>
</dbReference>
<dbReference type="InterPro" id="IPR000821">
    <property type="entry name" value="Ala_racemase"/>
</dbReference>
<dbReference type="InterPro" id="IPR009006">
    <property type="entry name" value="Ala_racemase/Decarboxylase_C"/>
</dbReference>
<dbReference type="InterPro" id="IPR011079">
    <property type="entry name" value="Ala_racemase_C"/>
</dbReference>
<dbReference type="InterPro" id="IPR001608">
    <property type="entry name" value="Ala_racemase_N"/>
</dbReference>
<dbReference type="InterPro" id="IPR020622">
    <property type="entry name" value="Ala_racemase_pyridoxalP-BS"/>
</dbReference>
<dbReference type="InterPro" id="IPR029066">
    <property type="entry name" value="PLP-binding_barrel"/>
</dbReference>
<dbReference type="InterPro" id="IPR043698">
    <property type="entry name" value="Racemase_Bsr/Lyr"/>
</dbReference>
<dbReference type="NCBIfam" id="TIGR00492">
    <property type="entry name" value="alr"/>
    <property type="match status" value="1"/>
</dbReference>
<dbReference type="NCBIfam" id="NF009879">
    <property type="entry name" value="PRK13340.1-4"/>
    <property type="match status" value="1"/>
</dbReference>
<dbReference type="PANTHER" id="PTHR30511">
    <property type="entry name" value="ALANINE RACEMASE"/>
    <property type="match status" value="1"/>
</dbReference>
<dbReference type="PANTHER" id="PTHR30511:SF0">
    <property type="entry name" value="ALANINE RACEMASE, CATABOLIC-RELATED"/>
    <property type="match status" value="1"/>
</dbReference>
<dbReference type="Pfam" id="PF00842">
    <property type="entry name" value="Ala_racemase_C"/>
    <property type="match status" value="1"/>
</dbReference>
<dbReference type="Pfam" id="PF01168">
    <property type="entry name" value="Ala_racemase_N"/>
    <property type="match status" value="1"/>
</dbReference>
<dbReference type="PRINTS" id="PR00992">
    <property type="entry name" value="ALARACEMASE"/>
</dbReference>
<dbReference type="SMART" id="SM01005">
    <property type="entry name" value="Ala_racemase_C"/>
    <property type="match status" value="1"/>
</dbReference>
<dbReference type="SUPFAM" id="SSF50621">
    <property type="entry name" value="Alanine racemase C-terminal domain-like"/>
    <property type="match status" value="1"/>
</dbReference>
<dbReference type="SUPFAM" id="SSF51419">
    <property type="entry name" value="PLP-binding barrel"/>
    <property type="match status" value="1"/>
</dbReference>
<dbReference type="PROSITE" id="PS00395">
    <property type="entry name" value="ALANINE_RACEMASE"/>
    <property type="match status" value="1"/>
</dbReference>
<accession>Q8D6Q0</accession>
<protein>
    <recommendedName>
        <fullName evidence="1">Broad specificity amino-acid racemase</fullName>
        <ecNumber evidence="1">5.1.1.10</ecNumber>
    </recommendedName>
</protein>
<keyword id="KW-1015">Disulfide bond</keyword>
<keyword id="KW-0413">Isomerase</keyword>
<keyword id="KW-0574">Periplasm</keyword>
<keyword id="KW-0663">Pyridoxal phosphate</keyword>
<keyword id="KW-0732">Signal</keyword>
<gene>
    <name type="primary">alr</name>
    <name type="ordered locus">VV2_0478</name>
</gene>
<reference key="1">
    <citation type="submission" date="2002-12" db="EMBL/GenBank/DDBJ databases">
        <title>Complete genome sequence of Vibrio vulnificus CMCP6.</title>
        <authorList>
            <person name="Rhee J.H."/>
            <person name="Kim S.Y."/>
            <person name="Chung S.S."/>
            <person name="Kim J.J."/>
            <person name="Moon Y.H."/>
            <person name="Jeong H."/>
            <person name="Choy H.E."/>
        </authorList>
    </citation>
    <scope>NUCLEOTIDE SEQUENCE [LARGE SCALE GENOMIC DNA]</scope>
    <source>
        <strain>CMCP6</strain>
    </source>
</reference>
<evidence type="ECO:0000255" key="1">
    <source>
        <dbReference type="HAMAP-Rule" id="MF_02212"/>
    </source>
</evidence>
<proteinExistence type="inferred from homology"/>
<name>BSR_VIBVU</name>